<organism>
    <name type="scientific">Arabidopsis thaliana</name>
    <name type="common">Mouse-ear cress</name>
    <dbReference type="NCBI Taxonomy" id="3702"/>
    <lineage>
        <taxon>Eukaryota</taxon>
        <taxon>Viridiplantae</taxon>
        <taxon>Streptophyta</taxon>
        <taxon>Embryophyta</taxon>
        <taxon>Tracheophyta</taxon>
        <taxon>Spermatophyta</taxon>
        <taxon>Magnoliopsida</taxon>
        <taxon>eudicotyledons</taxon>
        <taxon>Gunneridae</taxon>
        <taxon>Pentapetalae</taxon>
        <taxon>rosids</taxon>
        <taxon>malvids</taxon>
        <taxon>Brassicales</taxon>
        <taxon>Brassicaceae</taxon>
        <taxon>Camelineae</taxon>
        <taxon>Arabidopsis</taxon>
    </lineage>
</organism>
<proteinExistence type="evidence at transcript level"/>
<sequence>MASVSAIGVLKVPPASTSNSTGKATEAVPTRTLSFSSSVTSSDDKISLKSTVSRLCKSVVRRNPIIVSPKAVSDSQNSQTCLDPDASSSVLGIILGGGAGTRLYPLTKKRAKPAVPLGANYRLIDIPVSNCLNSNISKIYVLTQFNSASLNRHLSRAYASNMGGYKNEGFVEVLAAQQSPENPNWFQGTADAVRQYLWLFEEHNVLEYLILAGDHLYRMDYEKFIQAHRETDADITVAALPMDEQRATAFGLMKIDEEGRIIEFAEKPKGEHLKAMKVDTTILGLDDQRAKEMPFIASMGIYVVSRDVMLDLLRNQFPGANDFGSEVIPGATSLGLRVQAYLYDGYWEDIGTIEAFYNANLGITKKPVPDFSFYDRSAPIYTQPRYLPPSKMLDADVTDSVIGEGCVIKNCKIHHSVVGLRSCISEGAIIEDSLLMGADYYETATEKSLLSAKGSVPIGIGKNSHIKRAIIDKNARIGDNVKIINSDNVQEAARETDGYFIKSGIVTVIKDALIPTGTVI</sequence>
<evidence type="ECO:0000250" key="1"/>
<evidence type="ECO:0000255" key="2"/>
<evidence type="ECO:0000305" key="3"/>
<comment type="function">
    <text>This protein plays a role in synthesis of starch. It catalyzes the synthesis of the activated glycosyl donor, ADP-glucose from Glc-1-P and ATP.</text>
</comment>
<comment type="catalytic activity">
    <reaction>
        <text>alpha-D-glucose 1-phosphate + ATP + H(+) = ADP-alpha-D-glucose + diphosphate</text>
        <dbReference type="Rhea" id="RHEA:12120"/>
        <dbReference type="ChEBI" id="CHEBI:15378"/>
        <dbReference type="ChEBI" id="CHEBI:30616"/>
        <dbReference type="ChEBI" id="CHEBI:33019"/>
        <dbReference type="ChEBI" id="CHEBI:57498"/>
        <dbReference type="ChEBI" id="CHEBI:58601"/>
        <dbReference type="EC" id="2.7.7.27"/>
    </reaction>
</comment>
<comment type="activity regulation">
    <text>Activated by 3'phosphoglycerate, inhibited by orthophosphate. Allosteric regulation.</text>
</comment>
<comment type="pathway">
    <text>Glycan biosynthesis; starch biosynthesis.</text>
</comment>
<comment type="subunit">
    <text>Heterotetramer.</text>
</comment>
<comment type="subcellular location">
    <subcellularLocation>
        <location evidence="1">Plastid</location>
        <location evidence="1">Chloroplast</location>
    </subcellularLocation>
</comment>
<comment type="tissue specificity">
    <text>Leaves.</text>
</comment>
<comment type="similarity">
    <text evidence="3">Belongs to the bacterial/plant glucose-1-phosphate adenylyltransferase family.</text>
</comment>
<accession>P55228</accession>
<accession>O64400</accession>
<accession>Q96534</accession>
<name>GLGS_ARATH</name>
<reference key="1">
    <citation type="journal article" date="1998" name="Plant J.">
        <title>Characterization of ADG1, an Arabidopsis locus encoding for ADPG pyrophosphorylase small subunit, demonstrates that the presence of the small subunit is required for large subunit stability.</title>
        <authorList>
            <person name="Wang S.-M."/>
            <person name="Lue W.-L."/>
            <person name="Yu T.-S."/>
            <person name="Long J.-H."/>
            <person name="Wang C.-N."/>
            <person name="Eimert K."/>
            <person name="Chen J."/>
        </authorList>
    </citation>
    <scope>NUCLEOTIDE SEQUENCE [MRNA]</scope>
    <source>
        <strain>cv. Columbia</strain>
        <tissue>Leaf</tissue>
    </source>
</reference>
<reference key="2">
    <citation type="submission" date="1996-09" db="EMBL/GenBank/DDBJ databases">
        <title>cDNA cloning of ADP glucose pyrophosphorylase small subunit in Arabidopsis thaliana.</title>
        <authorList>
            <person name="Choi S.B."/>
            <person name="Okita T.W."/>
        </authorList>
    </citation>
    <scope>NUCLEOTIDE SEQUENCE [MRNA]</scope>
    <source>
        <strain>cv. Columbia</strain>
    </source>
</reference>
<reference key="3">
    <citation type="submission" date="2000-03" db="EMBL/GenBank/DDBJ databases">
        <title>Isolation of ADPglucose pyrophosphorylase small subunit gene from Arabidopsis thaliana.</title>
        <authorList>
            <person name="Ito H."/>
            <person name="Kato C."/>
            <person name="Matsui H."/>
            <person name="Okita T.W."/>
        </authorList>
    </citation>
    <scope>NUCLEOTIDE SEQUENCE [GENOMIC DNA]</scope>
    <source>
        <strain>cv. Columbia</strain>
    </source>
</reference>
<reference key="4">
    <citation type="submission" date="1999-07" db="EMBL/GenBank/DDBJ databases">
        <title>Structural analysis of Arabidopsis thaliana chromosome 5. XI.</title>
        <authorList>
            <person name="Kaneko T."/>
            <person name="Katoh T."/>
            <person name="Asamizu E."/>
            <person name="Sato S."/>
            <person name="Nakamura Y."/>
            <person name="Kotani H."/>
            <person name="Tabata S."/>
        </authorList>
    </citation>
    <scope>NUCLEOTIDE SEQUENCE [LARGE SCALE GENOMIC DNA]</scope>
    <source>
        <strain>cv. Columbia</strain>
    </source>
</reference>
<reference key="5">
    <citation type="journal article" date="2017" name="Plant J.">
        <title>Araport11: a complete reannotation of the Arabidopsis thaliana reference genome.</title>
        <authorList>
            <person name="Cheng C.Y."/>
            <person name="Krishnakumar V."/>
            <person name="Chan A.P."/>
            <person name="Thibaud-Nissen F."/>
            <person name="Schobel S."/>
            <person name="Town C.D."/>
        </authorList>
    </citation>
    <scope>GENOME REANNOTATION</scope>
    <source>
        <strain>cv. Columbia</strain>
    </source>
</reference>
<reference key="6">
    <citation type="journal article" date="2003" name="Science">
        <title>Empirical analysis of transcriptional activity in the Arabidopsis genome.</title>
        <authorList>
            <person name="Yamada K."/>
            <person name="Lim J."/>
            <person name="Dale J.M."/>
            <person name="Chen H."/>
            <person name="Shinn P."/>
            <person name="Palm C.J."/>
            <person name="Southwick A.M."/>
            <person name="Wu H.C."/>
            <person name="Kim C.J."/>
            <person name="Nguyen M."/>
            <person name="Pham P.K."/>
            <person name="Cheuk R.F."/>
            <person name="Karlin-Newmann G."/>
            <person name="Liu S.X."/>
            <person name="Lam B."/>
            <person name="Sakano H."/>
            <person name="Wu T."/>
            <person name="Yu G."/>
            <person name="Miranda M."/>
            <person name="Quach H.L."/>
            <person name="Tripp M."/>
            <person name="Chang C.H."/>
            <person name="Lee J.M."/>
            <person name="Toriumi M.J."/>
            <person name="Chan M.M."/>
            <person name="Tang C.C."/>
            <person name="Onodera C.S."/>
            <person name="Deng J.M."/>
            <person name="Akiyama K."/>
            <person name="Ansari Y."/>
            <person name="Arakawa T."/>
            <person name="Banh J."/>
            <person name="Banno F."/>
            <person name="Bowser L."/>
            <person name="Brooks S.Y."/>
            <person name="Carninci P."/>
            <person name="Chao Q."/>
            <person name="Choy N."/>
            <person name="Enju A."/>
            <person name="Goldsmith A.D."/>
            <person name="Gurjal M."/>
            <person name="Hansen N.F."/>
            <person name="Hayashizaki Y."/>
            <person name="Johnson-Hopson C."/>
            <person name="Hsuan V.W."/>
            <person name="Iida K."/>
            <person name="Karnes M."/>
            <person name="Khan S."/>
            <person name="Koesema E."/>
            <person name="Ishida J."/>
            <person name="Jiang P.X."/>
            <person name="Jones T."/>
            <person name="Kawai J."/>
            <person name="Kamiya A."/>
            <person name="Meyers C."/>
            <person name="Nakajima M."/>
            <person name="Narusaka M."/>
            <person name="Seki M."/>
            <person name="Sakurai T."/>
            <person name="Satou M."/>
            <person name="Tamse R."/>
            <person name="Vaysberg M."/>
            <person name="Wallender E.K."/>
            <person name="Wong C."/>
            <person name="Yamamura Y."/>
            <person name="Yuan S."/>
            <person name="Shinozaki K."/>
            <person name="Davis R.W."/>
            <person name="Theologis A."/>
            <person name="Ecker J.R."/>
        </authorList>
    </citation>
    <scope>NUCLEOTIDE SEQUENCE [LARGE SCALE MRNA]</scope>
    <source>
        <strain>cv. Columbia</strain>
    </source>
</reference>
<reference key="7">
    <citation type="journal article" date="1993" name="Plant Mol. Biol.">
        <title>Molecular characterization of multiple cDNA clones for ADP-glucose pyrophosphorylase from Arabidopsis thaliana.</title>
        <authorList>
            <person name="Villand P."/>
            <person name="Olsen O.-A."/>
            <person name="Kleczkowski L.A."/>
        </authorList>
    </citation>
    <scope>NUCLEOTIDE SEQUENCE [MRNA] OF 293-478</scope>
    <source>
        <strain>cv. Columbia</strain>
    </source>
</reference>
<protein>
    <recommendedName>
        <fullName>Glucose-1-phosphate adenylyltransferase small subunit, chloroplastic</fullName>
        <ecNumber>2.7.7.27</ecNumber>
    </recommendedName>
    <alternativeName>
        <fullName>ADP-glucose pyrophosphorylase</fullName>
    </alternativeName>
    <alternativeName>
        <fullName>ADP-glucose synthase</fullName>
    </alternativeName>
    <alternativeName>
        <fullName>AGPase B</fullName>
    </alternativeName>
    <alternativeName>
        <fullName>Alpha-D-glucose-1-phosphate adenyl transferase</fullName>
    </alternativeName>
</protein>
<keyword id="KW-0021">Allosteric enzyme</keyword>
<keyword id="KW-0067">ATP-binding</keyword>
<keyword id="KW-0150">Chloroplast</keyword>
<keyword id="KW-0547">Nucleotide-binding</keyword>
<keyword id="KW-0548">Nucleotidyltransferase</keyword>
<keyword id="KW-0934">Plastid</keyword>
<keyword id="KW-1185">Reference proteome</keyword>
<keyword id="KW-0750">Starch biosynthesis</keyword>
<keyword id="KW-0808">Transferase</keyword>
<keyword id="KW-0809">Transit peptide</keyword>
<feature type="transit peptide" description="Chloroplast" evidence="2">
    <location>
        <begin position="1"/>
        <end position="71"/>
    </location>
</feature>
<feature type="chain" id="PRO_0000011149" description="Glucose-1-phosphate adenylyltransferase small subunit, chloroplastic">
    <location>
        <begin position="72"/>
        <end position="520"/>
    </location>
</feature>
<feature type="sequence conflict" description="In Ref. 2; AAB09585." evidence="3" ref="2">
    <original>RQ</original>
    <variation>TD</variation>
    <location>
        <begin position="194"/>
        <end position="195"/>
    </location>
</feature>
<feature type="sequence conflict" description="In Ref. 2; AAB09585." evidence="3" ref="2">
    <original>A</original>
    <variation>S</variation>
    <location>
        <position position="265"/>
    </location>
</feature>
<feature type="sequence conflict" description="In Ref. 7; CAA51777." evidence="3" ref="7">
    <original>MPFIAS</original>
    <variation>YPYIAG</variation>
    <location>
        <begin position="293"/>
        <end position="298"/>
    </location>
</feature>
<feature type="sequence conflict" description="In Ref. 7; CAA51777." evidence="3" ref="7">
    <original>TS</original>
    <variation>PF</variation>
    <location>
        <begin position="332"/>
        <end position="333"/>
    </location>
</feature>
<feature type="sequence conflict" description="In Ref. 2; AAB09585." evidence="3" ref="2">
    <original>S</original>
    <variation>A</variation>
    <location>
        <position position="451"/>
    </location>
</feature>
<feature type="sequence conflict" description="In Ref. 7; CAA51777." evidence="3" ref="7">
    <original>K</original>
    <variation>I</variation>
    <location>
        <position position="473"/>
    </location>
</feature>
<feature type="sequence conflict" description="In Ref. 2; AAB09585." evidence="3" ref="2">
    <original>A</original>
    <variation>S</variation>
    <location>
        <position position="475"/>
    </location>
</feature>
<dbReference type="EC" id="2.7.7.27"/>
<dbReference type="EMBL" id="U72351">
    <property type="protein sequence ID" value="AAC39441.1"/>
    <property type="molecule type" value="mRNA"/>
</dbReference>
<dbReference type="EMBL" id="U70616">
    <property type="protein sequence ID" value="AAB09585.1"/>
    <property type="molecule type" value="mRNA"/>
</dbReference>
<dbReference type="EMBL" id="AB039889">
    <property type="protein sequence ID" value="BAA92523.1"/>
    <property type="molecule type" value="Genomic_DNA"/>
</dbReference>
<dbReference type="EMBL" id="AP000372">
    <property type="protein sequence ID" value="BAA98187.1"/>
    <property type="molecule type" value="Genomic_DNA"/>
</dbReference>
<dbReference type="EMBL" id="CP002688">
    <property type="protein sequence ID" value="AED95648.1"/>
    <property type="molecule type" value="Genomic_DNA"/>
</dbReference>
<dbReference type="EMBL" id="AY049265">
    <property type="protein sequence ID" value="AAK83607.1"/>
    <property type="molecule type" value="mRNA"/>
</dbReference>
<dbReference type="EMBL" id="AY065428">
    <property type="protein sequence ID" value="AAL38869.1"/>
    <property type="molecule type" value="mRNA"/>
</dbReference>
<dbReference type="EMBL" id="AY090283">
    <property type="protein sequence ID" value="AAL90944.1"/>
    <property type="molecule type" value="mRNA"/>
</dbReference>
<dbReference type="EMBL" id="AY096379">
    <property type="protein sequence ID" value="AAM20020.1"/>
    <property type="molecule type" value="mRNA"/>
</dbReference>
<dbReference type="EMBL" id="X73365">
    <property type="protein sequence ID" value="CAA51777.1"/>
    <property type="molecule type" value="mRNA"/>
</dbReference>
<dbReference type="RefSeq" id="NP_199641.1">
    <property type="nucleotide sequence ID" value="NM_124205.4"/>
</dbReference>
<dbReference type="SMR" id="P55228"/>
<dbReference type="BioGRID" id="20129">
    <property type="interactions" value="9"/>
</dbReference>
<dbReference type="FunCoup" id="P55228">
    <property type="interactions" value="1167"/>
</dbReference>
<dbReference type="IntAct" id="P55228">
    <property type="interactions" value="3"/>
</dbReference>
<dbReference type="STRING" id="3702.P55228"/>
<dbReference type="iPTMnet" id="P55228"/>
<dbReference type="PaxDb" id="3702-AT5G48300.1"/>
<dbReference type="ProteomicsDB" id="220773"/>
<dbReference type="EnsemblPlants" id="AT5G48300.1">
    <property type="protein sequence ID" value="AT5G48300.1"/>
    <property type="gene ID" value="AT5G48300"/>
</dbReference>
<dbReference type="GeneID" id="834883"/>
<dbReference type="Gramene" id="AT5G48300.1">
    <property type="protein sequence ID" value="AT5G48300.1"/>
    <property type="gene ID" value="AT5G48300"/>
</dbReference>
<dbReference type="KEGG" id="ath:AT5G48300"/>
<dbReference type="Araport" id="AT5G48300"/>
<dbReference type="TAIR" id="AT5G48300">
    <property type="gene designation" value="ADG1"/>
</dbReference>
<dbReference type="eggNOG" id="KOG1322">
    <property type="taxonomic scope" value="Eukaryota"/>
</dbReference>
<dbReference type="HOGENOM" id="CLU_029499_14_4_1"/>
<dbReference type="InParanoid" id="P55228"/>
<dbReference type="OMA" id="AYHEASM"/>
<dbReference type="PhylomeDB" id="P55228"/>
<dbReference type="BioCyc" id="ARA:AT5G48300-MONOMER"/>
<dbReference type="BioCyc" id="MetaCyc:MONOMER-1822"/>
<dbReference type="BRENDA" id="2.7.7.27">
    <property type="organism ID" value="399"/>
</dbReference>
<dbReference type="SABIO-RK" id="P55228"/>
<dbReference type="UniPathway" id="UPA00152"/>
<dbReference type="CD-CODE" id="4299E36E">
    <property type="entry name" value="Nucleolus"/>
</dbReference>
<dbReference type="PRO" id="PR:P55228"/>
<dbReference type="Proteomes" id="UP000006548">
    <property type="component" value="Chromosome 5"/>
</dbReference>
<dbReference type="ExpressionAtlas" id="P55228">
    <property type="expression patterns" value="baseline and differential"/>
</dbReference>
<dbReference type="GO" id="GO:0048046">
    <property type="term" value="C:apoplast"/>
    <property type="evidence" value="ECO:0007005"/>
    <property type="project" value="TAIR"/>
</dbReference>
<dbReference type="GO" id="GO:0009507">
    <property type="term" value="C:chloroplast"/>
    <property type="evidence" value="ECO:0007005"/>
    <property type="project" value="TAIR"/>
</dbReference>
<dbReference type="GO" id="GO:0009570">
    <property type="term" value="C:chloroplast stroma"/>
    <property type="evidence" value="ECO:0007005"/>
    <property type="project" value="TAIR"/>
</dbReference>
<dbReference type="GO" id="GO:0030931">
    <property type="term" value="C:heterotetrameric ADPG pyrophosphorylase complex"/>
    <property type="evidence" value="ECO:0000315"/>
    <property type="project" value="TAIR"/>
</dbReference>
<dbReference type="GO" id="GO:0009536">
    <property type="term" value="C:plastid"/>
    <property type="evidence" value="ECO:0007005"/>
    <property type="project" value="TAIR"/>
</dbReference>
<dbReference type="GO" id="GO:0005524">
    <property type="term" value="F:ATP binding"/>
    <property type="evidence" value="ECO:0007669"/>
    <property type="project" value="UniProtKB-KW"/>
</dbReference>
<dbReference type="GO" id="GO:0008878">
    <property type="term" value="F:glucose-1-phosphate adenylyltransferase activity"/>
    <property type="evidence" value="ECO:0000314"/>
    <property type="project" value="TAIR"/>
</dbReference>
<dbReference type="GO" id="GO:0005978">
    <property type="term" value="P:glycogen biosynthetic process"/>
    <property type="evidence" value="ECO:0007669"/>
    <property type="project" value="InterPro"/>
</dbReference>
<dbReference type="GO" id="GO:0048573">
    <property type="term" value="P:photoperiodism, flowering"/>
    <property type="evidence" value="ECO:0000315"/>
    <property type="project" value="TAIR"/>
</dbReference>
<dbReference type="GO" id="GO:0019252">
    <property type="term" value="P:starch biosynthetic process"/>
    <property type="evidence" value="ECO:0000315"/>
    <property type="project" value="TAIR"/>
</dbReference>
<dbReference type="CDD" id="cd02508">
    <property type="entry name" value="ADP_Glucose_PP"/>
    <property type="match status" value="1"/>
</dbReference>
<dbReference type="CDD" id="cd04651">
    <property type="entry name" value="LbH_G1P_AT_C"/>
    <property type="match status" value="1"/>
</dbReference>
<dbReference type="FunFam" id="2.160.10.10:FF:000010">
    <property type="entry name" value="Glucose-1-phosphate adenylyltransferase"/>
    <property type="match status" value="1"/>
</dbReference>
<dbReference type="FunFam" id="3.90.550.10:FF:000030">
    <property type="entry name" value="Glucose-1-phosphate adenylyltransferase"/>
    <property type="match status" value="1"/>
</dbReference>
<dbReference type="Gene3D" id="2.160.10.10">
    <property type="entry name" value="Hexapeptide repeat proteins"/>
    <property type="match status" value="1"/>
</dbReference>
<dbReference type="Gene3D" id="3.90.550.10">
    <property type="entry name" value="Spore Coat Polysaccharide Biosynthesis Protein SpsA, Chain A"/>
    <property type="match status" value="1"/>
</dbReference>
<dbReference type="InterPro" id="IPR011831">
    <property type="entry name" value="ADP-Glc_PPase"/>
</dbReference>
<dbReference type="InterPro" id="IPR005836">
    <property type="entry name" value="ADP_Glu_pyroP_CS"/>
</dbReference>
<dbReference type="InterPro" id="IPR005835">
    <property type="entry name" value="NTP_transferase_dom"/>
</dbReference>
<dbReference type="InterPro" id="IPR029044">
    <property type="entry name" value="Nucleotide-diphossugar_trans"/>
</dbReference>
<dbReference type="InterPro" id="IPR011004">
    <property type="entry name" value="Trimer_LpxA-like_sf"/>
</dbReference>
<dbReference type="NCBIfam" id="TIGR02091">
    <property type="entry name" value="glgC"/>
    <property type="match status" value="1"/>
</dbReference>
<dbReference type="NCBIfam" id="NF002772">
    <property type="entry name" value="PRK02862.1"/>
    <property type="match status" value="1"/>
</dbReference>
<dbReference type="PANTHER" id="PTHR43523:SF12">
    <property type="entry name" value="GLUCOSE-1-PHOSPHATE ADENYLYLTRANSFERASE LARGE SUBUNIT 1, CHLOROPLASTIC-RELATED"/>
    <property type="match status" value="1"/>
</dbReference>
<dbReference type="PANTHER" id="PTHR43523">
    <property type="entry name" value="GLUCOSE-1-PHOSPHATE ADENYLYLTRANSFERASE-RELATED"/>
    <property type="match status" value="1"/>
</dbReference>
<dbReference type="Pfam" id="PF25247">
    <property type="entry name" value="LbH_GLGC"/>
    <property type="match status" value="1"/>
</dbReference>
<dbReference type="Pfam" id="PF00483">
    <property type="entry name" value="NTP_transferase"/>
    <property type="match status" value="1"/>
</dbReference>
<dbReference type="SUPFAM" id="SSF53448">
    <property type="entry name" value="Nucleotide-diphospho-sugar transferases"/>
    <property type="match status" value="1"/>
</dbReference>
<dbReference type="SUPFAM" id="SSF51161">
    <property type="entry name" value="Trimeric LpxA-like enzymes"/>
    <property type="match status" value="1"/>
</dbReference>
<dbReference type="PROSITE" id="PS00808">
    <property type="entry name" value="ADP_GLC_PYROPHOSPH_1"/>
    <property type="match status" value="1"/>
</dbReference>
<dbReference type="PROSITE" id="PS00809">
    <property type="entry name" value="ADP_GLC_PYROPHOSPH_2"/>
    <property type="match status" value="1"/>
</dbReference>
<dbReference type="PROSITE" id="PS00810">
    <property type="entry name" value="ADP_GLC_PYROPHOSPH_3"/>
    <property type="match status" value="1"/>
</dbReference>
<gene>
    <name type="primary">APS1</name>
    <name type="synonym">ADG1</name>
    <name type="synonym">APS</name>
    <name type="ordered locus">At5g48300</name>
    <name type="ORF">K23F3.2</name>
</gene>